<name>TGBR3_HUMAN</name>
<sequence length="851" mass="93499">MTSHYVIAIFALMSSCLATAGPEPGALCELSPVSASHPVQALMESFTVLSGCASRGTTGLPQEVHVLNLRTAGQGPGQLQREVTLHLNPISSVHIHHKSVVFLLNSPHPLVWHLKTERLATGVSRLFLVSEGSVVQFSSANFSLTAETEERNFPHGNEHLLNWARKEYGAVTSFTELKIARNIYIKVGEDQVFPPKCNIGKNFLSLNYLAEYLQPKAAEGCVMSSQPQNEEVHIIELITPNSNPYSAFQVDITIDIRPSQEDLEVVKNLILILKCKKSVNWVIKSFDVKGSLKIIAPNSIGFGKESERSMTMTKSIRDDIPSTQGNLVKWALDNGYSPITSYTMAPVANRFHLRLENNAEEMGDEEVHTIPPELRILLDPGALPALQNPPIRGGEGQNGGLPFPFPDISRRVWNEEGEDGLPRPKDPVIPSIQLFPGLREPEEVQGSVDIALSVKCDNEKMIVAVEKDSFQASGYSGMDVTLLDPTCKAKMNGTHFVLESPLNGCGTRPRWSALDGVVYYNSIVIQVPALGDSSGWPDGYEDLESGDNGFPGDMDEGDASLFTRPEIVVFNCSLQQVRNPSSFQEQPHGNITFNMELYNTDLFLVPSQGVFSVPENGHVYVEVSVTKAEQELGFAIQTCFISPYSNPDRMSHYTIIENICPKDESVKFYSPKRVHFPIPQADMDKKRFSFVFKPVFNTSLLFLQCELTLCTKMEKHPQKLPKCVPPDEACTSLDASIIWAMMQNKKTFTKPLAVIHHEAESKEKGPSMKEPNPISPPIFHGLDTLTVMGIAFAAFVIGALLTGALWYIYSHTGETAGRQQVPTSPPASENSSAAHSIGSTQSTPCSSSSTA</sequence>
<gene>
    <name evidence="22" type="primary">TGFBR3</name>
</gene>
<reference key="1">
    <citation type="journal article" date="1992" name="Biochem. Biophys. Res. Commun.">
        <title>Molecular cloning and characterization of the human and porcine transforming growth factor-beta type III receptors.</title>
        <authorList>
            <person name="Moren A."/>
            <person name="Ichijo H."/>
            <person name="Miyazono K."/>
        </authorList>
    </citation>
    <scope>NUCLEOTIDE SEQUENCE [MRNA] (ISOFORM 2)</scope>
    <scope>VARIANT PHE-15</scope>
    <source>
        <tissue>Placenta</tissue>
    </source>
</reference>
<reference key="2">
    <citation type="journal article" date="2000" name="J. Hum. Genet.">
        <title>Eleven single nucleotide polymorphisms and one triple nucleotide insertion of the human TGF-beta III receptor gene.</title>
        <authorList>
            <person name="Zippert R."/>
            <person name="Baessler A."/>
            <person name="Holmer S.R."/>
            <person name="Hengstenberg C."/>
            <person name="Schunkert H."/>
        </authorList>
    </citation>
    <scope>NUCLEOTIDE SEQUENCE [MRNA] (ISOFORM 1)</scope>
    <scope>VARIANT PHE-15</scope>
    <source>
        <tissue>Blood</tissue>
    </source>
</reference>
<reference key="3">
    <citation type="submission" date="2004-10" db="EMBL/GenBank/DDBJ databases">
        <authorList>
            <consortium name="NIEHS SNPs program"/>
        </authorList>
    </citation>
    <scope>NUCLEOTIDE SEQUENCE [GENOMIC DNA]</scope>
    <scope>VARIANTS ASN-14; PHE-15; LEU-163; THR-635 AND ARG-765</scope>
</reference>
<reference key="4">
    <citation type="journal article" date="2004" name="Nat. Genet.">
        <title>Complete sequencing and characterization of 21,243 full-length human cDNAs.</title>
        <authorList>
            <person name="Ota T."/>
            <person name="Suzuki Y."/>
            <person name="Nishikawa T."/>
            <person name="Otsuki T."/>
            <person name="Sugiyama T."/>
            <person name="Irie R."/>
            <person name="Wakamatsu A."/>
            <person name="Hayashi K."/>
            <person name="Sato H."/>
            <person name="Nagai K."/>
            <person name="Kimura K."/>
            <person name="Makita H."/>
            <person name="Sekine M."/>
            <person name="Obayashi M."/>
            <person name="Nishi T."/>
            <person name="Shibahara T."/>
            <person name="Tanaka T."/>
            <person name="Ishii S."/>
            <person name="Yamamoto J."/>
            <person name="Saito K."/>
            <person name="Kawai Y."/>
            <person name="Isono Y."/>
            <person name="Nakamura Y."/>
            <person name="Nagahari K."/>
            <person name="Murakami K."/>
            <person name="Yasuda T."/>
            <person name="Iwayanagi T."/>
            <person name="Wagatsuma M."/>
            <person name="Shiratori A."/>
            <person name="Sudo H."/>
            <person name="Hosoiri T."/>
            <person name="Kaku Y."/>
            <person name="Kodaira H."/>
            <person name="Kondo H."/>
            <person name="Sugawara M."/>
            <person name="Takahashi M."/>
            <person name="Kanda K."/>
            <person name="Yokoi T."/>
            <person name="Furuya T."/>
            <person name="Kikkawa E."/>
            <person name="Omura Y."/>
            <person name="Abe K."/>
            <person name="Kamihara K."/>
            <person name="Katsuta N."/>
            <person name="Sato K."/>
            <person name="Tanikawa M."/>
            <person name="Yamazaki M."/>
            <person name="Ninomiya K."/>
            <person name="Ishibashi T."/>
            <person name="Yamashita H."/>
            <person name="Murakawa K."/>
            <person name="Fujimori K."/>
            <person name="Tanai H."/>
            <person name="Kimata M."/>
            <person name="Watanabe M."/>
            <person name="Hiraoka S."/>
            <person name="Chiba Y."/>
            <person name="Ishida S."/>
            <person name="Ono Y."/>
            <person name="Takiguchi S."/>
            <person name="Watanabe S."/>
            <person name="Yosida M."/>
            <person name="Hotuta T."/>
            <person name="Kusano J."/>
            <person name="Kanehori K."/>
            <person name="Takahashi-Fujii A."/>
            <person name="Hara H."/>
            <person name="Tanase T.-O."/>
            <person name="Nomura Y."/>
            <person name="Togiya S."/>
            <person name="Komai F."/>
            <person name="Hara R."/>
            <person name="Takeuchi K."/>
            <person name="Arita M."/>
            <person name="Imose N."/>
            <person name="Musashino K."/>
            <person name="Yuuki H."/>
            <person name="Oshima A."/>
            <person name="Sasaki N."/>
            <person name="Aotsuka S."/>
            <person name="Yoshikawa Y."/>
            <person name="Matsunawa H."/>
            <person name="Ichihara T."/>
            <person name="Shiohata N."/>
            <person name="Sano S."/>
            <person name="Moriya S."/>
            <person name="Momiyama H."/>
            <person name="Satoh N."/>
            <person name="Takami S."/>
            <person name="Terashima Y."/>
            <person name="Suzuki O."/>
            <person name="Nakagawa S."/>
            <person name="Senoh A."/>
            <person name="Mizoguchi H."/>
            <person name="Goto Y."/>
            <person name="Shimizu F."/>
            <person name="Wakebe H."/>
            <person name="Hishigaki H."/>
            <person name="Watanabe T."/>
            <person name="Sugiyama A."/>
            <person name="Takemoto M."/>
            <person name="Kawakami B."/>
            <person name="Yamazaki M."/>
            <person name="Watanabe K."/>
            <person name="Kumagai A."/>
            <person name="Itakura S."/>
            <person name="Fukuzumi Y."/>
            <person name="Fujimori Y."/>
            <person name="Komiyama M."/>
            <person name="Tashiro H."/>
            <person name="Tanigami A."/>
            <person name="Fujiwara T."/>
            <person name="Ono T."/>
            <person name="Yamada K."/>
            <person name="Fujii Y."/>
            <person name="Ozaki K."/>
            <person name="Hirao M."/>
            <person name="Ohmori Y."/>
            <person name="Kawabata A."/>
            <person name="Hikiji T."/>
            <person name="Kobatake N."/>
            <person name="Inagaki H."/>
            <person name="Ikema Y."/>
            <person name="Okamoto S."/>
            <person name="Okitani R."/>
            <person name="Kawakami T."/>
            <person name="Noguchi S."/>
            <person name="Itoh T."/>
            <person name="Shigeta K."/>
            <person name="Senba T."/>
            <person name="Matsumura K."/>
            <person name="Nakajima Y."/>
            <person name="Mizuno T."/>
            <person name="Morinaga M."/>
            <person name="Sasaki M."/>
            <person name="Togashi T."/>
            <person name="Oyama M."/>
            <person name="Hata H."/>
            <person name="Watanabe M."/>
            <person name="Komatsu T."/>
            <person name="Mizushima-Sugano J."/>
            <person name="Satoh T."/>
            <person name="Shirai Y."/>
            <person name="Takahashi Y."/>
            <person name="Nakagawa K."/>
            <person name="Okumura K."/>
            <person name="Nagase T."/>
            <person name="Nomura N."/>
            <person name="Kikuchi H."/>
            <person name="Masuho Y."/>
            <person name="Yamashita R."/>
            <person name="Nakai K."/>
            <person name="Yada T."/>
            <person name="Nakamura Y."/>
            <person name="Ohara O."/>
            <person name="Isogai T."/>
            <person name="Sugano S."/>
        </authorList>
    </citation>
    <scope>NUCLEOTIDE SEQUENCE [LARGE SCALE MRNA]</scope>
    <source>
        <tissue>Tongue</tissue>
    </source>
</reference>
<reference key="5">
    <citation type="journal article" date="2006" name="Nature">
        <title>The DNA sequence and biological annotation of human chromosome 1.</title>
        <authorList>
            <person name="Gregory S.G."/>
            <person name="Barlow K.F."/>
            <person name="McLay K.E."/>
            <person name="Kaul R."/>
            <person name="Swarbreck D."/>
            <person name="Dunham A."/>
            <person name="Scott C.E."/>
            <person name="Howe K.L."/>
            <person name="Woodfine K."/>
            <person name="Spencer C.C.A."/>
            <person name="Jones M.C."/>
            <person name="Gillson C."/>
            <person name="Searle S."/>
            <person name="Zhou Y."/>
            <person name="Kokocinski F."/>
            <person name="McDonald L."/>
            <person name="Evans R."/>
            <person name="Phillips K."/>
            <person name="Atkinson A."/>
            <person name="Cooper R."/>
            <person name="Jones C."/>
            <person name="Hall R.E."/>
            <person name="Andrews T.D."/>
            <person name="Lloyd C."/>
            <person name="Ainscough R."/>
            <person name="Almeida J.P."/>
            <person name="Ambrose K.D."/>
            <person name="Anderson F."/>
            <person name="Andrew R.W."/>
            <person name="Ashwell R.I.S."/>
            <person name="Aubin K."/>
            <person name="Babbage A.K."/>
            <person name="Bagguley C.L."/>
            <person name="Bailey J."/>
            <person name="Beasley H."/>
            <person name="Bethel G."/>
            <person name="Bird C.P."/>
            <person name="Bray-Allen S."/>
            <person name="Brown J.Y."/>
            <person name="Brown A.J."/>
            <person name="Buckley D."/>
            <person name="Burton J."/>
            <person name="Bye J."/>
            <person name="Carder C."/>
            <person name="Chapman J.C."/>
            <person name="Clark S.Y."/>
            <person name="Clarke G."/>
            <person name="Clee C."/>
            <person name="Cobley V."/>
            <person name="Collier R.E."/>
            <person name="Corby N."/>
            <person name="Coville G.J."/>
            <person name="Davies J."/>
            <person name="Deadman R."/>
            <person name="Dunn M."/>
            <person name="Earthrowl M."/>
            <person name="Ellington A.G."/>
            <person name="Errington H."/>
            <person name="Frankish A."/>
            <person name="Frankland J."/>
            <person name="French L."/>
            <person name="Garner P."/>
            <person name="Garnett J."/>
            <person name="Gay L."/>
            <person name="Ghori M.R.J."/>
            <person name="Gibson R."/>
            <person name="Gilby L.M."/>
            <person name="Gillett W."/>
            <person name="Glithero R.J."/>
            <person name="Grafham D.V."/>
            <person name="Griffiths C."/>
            <person name="Griffiths-Jones S."/>
            <person name="Grocock R."/>
            <person name="Hammond S."/>
            <person name="Harrison E.S.I."/>
            <person name="Hart E."/>
            <person name="Haugen E."/>
            <person name="Heath P.D."/>
            <person name="Holmes S."/>
            <person name="Holt K."/>
            <person name="Howden P.J."/>
            <person name="Hunt A.R."/>
            <person name="Hunt S.E."/>
            <person name="Hunter G."/>
            <person name="Isherwood J."/>
            <person name="James R."/>
            <person name="Johnson C."/>
            <person name="Johnson D."/>
            <person name="Joy A."/>
            <person name="Kay M."/>
            <person name="Kershaw J.K."/>
            <person name="Kibukawa M."/>
            <person name="Kimberley A.M."/>
            <person name="King A."/>
            <person name="Knights A.J."/>
            <person name="Lad H."/>
            <person name="Laird G."/>
            <person name="Lawlor S."/>
            <person name="Leongamornlert D.A."/>
            <person name="Lloyd D.M."/>
            <person name="Loveland J."/>
            <person name="Lovell J."/>
            <person name="Lush M.J."/>
            <person name="Lyne R."/>
            <person name="Martin S."/>
            <person name="Mashreghi-Mohammadi M."/>
            <person name="Matthews L."/>
            <person name="Matthews N.S.W."/>
            <person name="McLaren S."/>
            <person name="Milne S."/>
            <person name="Mistry S."/>
            <person name="Moore M.J.F."/>
            <person name="Nickerson T."/>
            <person name="O'Dell C.N."/>
            <person name="Oliver K."/>
            <person name="Palmeiri A."/>
            <person name="Palmer S.A."/>
            <person name="Parker A."/>
            <person name="Patel D."/>
            <person name="Pearce A.V."/>
            <person name="Peck A.I."/>
            <person name="Pelan S."/>
            <person name="Phelps K."/>
            <person name="Phillimore B.J."/>
            <person name="Plumb R."/>
            <person name="Rajan J."/>
            <person name="Raymond C."/>
            <person name="Rouse G."/>
            <person name="Saenphimmachak C."/>
            <person name="Sehra H.K."/>
            <person name="Sheridan E."/>
            <person name="Shownkeen R."/>
            <person name="Sims S."/>
            <person name="Skuce C.D."/>
            <person name="Smith M."/>
            <person name="Steward C."/>
            <person name="Subramanian S."/>
            <person name="Sycamore N."/>
            <person name="Tracey A."/>
            <person name="Tromans A."/>
            <person name="Van Helmond Z."/>
            <person name="Wall M."/>
            <person name="Wallis J.M."/>
            <person name="White S."/>
            <person name="Whitehead S.L."/>
            <person name="Wilkinson J.E."/>
            <person name="Willey D.L."/>
            <person name="Williams H."/>
            <person name="Wilming L."/>
            <person name="Wray P.W."/>
            <person name="Wu Z."/>
            <person name="Coulson A."/>
            <person name="Vaudin M."/>
            <person name="Sulston J.E."/>
            <person name="Durbin R.M."/>
            <person name="Hubbard T."/>
            <person name="Wooster R."/>
            <person name="Dunham I."/>
            <person name="Carter N.P."/>
            <person name="McVean G."/>
            <person name="Ross M.T."/>
            <person name="Harrow J."/>
            <person name="Olson M.V."/>
            <person name="Beck S."/>
            <person name="Rogers J."/>
            <person name="Bentley D.R."/>
        </authorList>
    </citation>
    <scope>NUCLEOTIDE SEQUENCE [LARGE SCALE GENOMIC DNA]</scope>
</reference>
<reference key="6">
    <citation type="journal article" date="2004" name="Genome Res.">
        <title>The status, quality, and expansion of the NIH full-length cDNA project: the Mammalian Gene Collection (MGC).</title>
        <authorList>
            <consortium name="The MGC Project Team"/>
        </authorList>
    </citation>
    <scope>NUCLEOTIDE SEQUENCE [LARGE SCALE MRNA] (ISOFORM 1)</scope>
    <source>
        <tissue>Brain</tissue>
    </source>
</reference>
<reference key="7">
    <citation type="journal article" date="2001" name="J. Biol. Chem.">
        <title>Functional roles for the cytoplasmic domain of the type III transforming growth factor beta receptor in regulating transforming growth factor beta signaling.</title>
        <authorList>
            <person name="Blobe G.C."/>
            <person name="Schiemann W.P."/>
            <person name="Pepin M.C."/>
            <person name="Beauchemin M."/>
            <person name="Moustakas A."/>
            <person name="Lodish H.F."/>
            <person name="O'Connor-McCourt M.D."/>
        </authorList>
    </citation>
    <scope>FUNCTION</scope>
    <scope>PHOSPHORYLATION</scope>
    <scope>SUBUNIT</scope>
</reference>
<reference key="8">
    <citation type="journal article" date="2003" name="Science">
        <title>Beta-arrestin 2 mediates endocytosis of type III TGF-beta receptor and down-regulation of its signaling.</title>
        <authorList>
            <person name="Chen W."/>
            <person name="Kirkbride K.C."/>
            <person name="How T."/>
            <person name="Nelson C.D."/>
            <person name="Mo J."/>
            <person name="Frederick J.P."/>
            <person name="Wang X.-F."/>
            <person name="Lefkowitz R.J."/>
            <person name="Blobe G.C."/>
        </authorList>
    </citation>
    <scope>FUNCTION</scope>
    <scope>INTERACTION WITH ARRB2</scope>
    <scope>PHOSPHORYLATION AT THR-840</scope>
</reference>
<reference key="9">
    <citation type="journal article" date="2006" name="J. Biol. Chem.">
        <title>Identification of Tctex2beta, a novel dynein light chain family member that interacts with different transforming growth factor-beta receptors.</title>
        <authorList>
            <person name="Meng Q.-J."/>
            <person name="Lux A."/>
            <person name="Holloschi A."/>
            <person name="Li J."/>
            <person name="Hughes J.M.X."/>
            <person name="Foerg T."/>
            <person name="McCarthy J.E.G."/>
            <person name="Heagerty A.M."/>
            <person name="Kioschis P."/>
            <person name="Hafner M."/>
            <person name="Garland J.M."/>
        </authorList>
    </citation>
    <scope>INTERACTION WITH DYNLT4</scope>
</reference>
<reference key="10">
    <citation type="journal article" date="2008" name="J. Biol. Chem.">
        <title>Bone morphogenetic proteins signal through the transforming growth factor-beta type III receptor.</title>
        <authorList>
            <person name="Kirkbride K.C."/>
            <person name="Townsend T.A."/>
            <person name="Bruinsma M.W."/>
            <person name="Barnett J.V."/>
            <person name="Blobe G.C."/>
        </authorList>
    </citation>
    <scope>FUNCTION</scope>
    <scope>INTERACTION WITH TGFB1; BMP2; BMP4; BMP7 AND GDF5</scope>
</reference>
<reference key="11">
    <citation type="journal article" date="2009" name="Mol. Biol. Cell">
        <title>The transforming growth factor-beta type III receptor mediates distinct subcellular trafficking and downstream signaling of activin-like kinase (ALK)3 and ALK6 receptors.</title>
        <authorList>
            <person name="Lee N.Y."/>
            <person name="Kirkbride K.C."/>
            <person name="Sheu R.D."/>
            <person name="Blobe G.C."/>
        </authorList>
    </citation>
    <scope>INTERACTION WITH BMPR1A; BMPR1B AND ARRB2</scope>
    <scope>FUNCTION</scope>
    <scope>SUBCELLULAR LOCATION</scope>
</reference>
<reference key="12">
    <citation type="journal article" date="2009" name="Proc. Natl. Acad. Sci. U.S.A.">
        <title>The type III TGF-beta receptor regulates epithelial and cancer cell migration through beta-arrestin2-mediated activation of Cdc42.</title>
        <authorList>
            <person name="Mythreye K."/>
            <person name="Blobe G.C."/>
        </authorList>
    </citation>
    <scope>FUNCTION</scope>
    <scope>MUTAGENESIS OF THR-840</scope>
    <scope>INTERACTION WITH ARRB2</scope>
    <scope>SUBCELLULAR LOCATION</scope>
</reference>
<reference key="13">
    <citation type="journal article" date="2009" name="Carcinogenesis">
        <title>The type III transforming growth factor-beta receptor negatively regulates nuclear factor kappa B signaling through its interaction with beta-arrestin2.</title>
        <authorList>
            <person name="You H.J."/>
            <person name="How T."/>
            <person name="Blobe G.C."/>
        </authorList>
    </citation>
    <scope>FUNCTION</scope>
    <scope>INTERACTION WITH ARRB2</scope>
</reference>
<reference key="14">
    <citation type="journal article" date="2011" name="Dev. Biol.">
        <title>The cytoplasmic domain of TGFbetaR3 through its interaction with the scaffolding protein, GIPC, directs epicardial cell behavior.</title>
        <authorList>
            <person name="Sanchez N.S."/>
            <person name="Hill C.R."/>
            <person name="Love J.D."/>
            <person name="Soslow J.H."/>
            <person name="Craig E."/>
            <person name="Austin A.F."/>
            <person name="Brown C.B."/>
            <person name="Czirok A."/>
            <person name="Camenisch T.D."/>
            <person name="Barnett J.V."/>
        </authorList>
    </citation>
    <scope>FUNCTION</scope>
    <scope>INTERACTION WITH GIPC</scope>
</reference>
<reference key="15">
    <citation type="journal article" date="2013" name="Oncogene">
        <title>TbetaRIII/beta-arrestin2 regulates integrin alpha5beta1 trafficking, function, and localization in epithelial cells.</title>
        <authorList>
            <person name="Mythreye K."/>
            <person name="Knelson E.H."/>
            <person name="Gatza C.E."/>
            <person name="Gatza M.L."/>
            <person name="Blobe G.C."/>
        </authorList>
    </citation>
    <scope>FUNCTION</scope>
    <scope>SUBCELLULAR LOCATION</scope>
    <scope>INTERACTION WITH INTEGRIN ALPHA5/BETA1</scope>
</reference>
<reference key="16">
    <citation type="journal article" date="2021" name="Sci. Adv.">
        <title>TGFBR3L is an inhibin B co-receptor that regulates female fertility.</title>
        <authorList>
            <person name="Brule E."/>
            <person name="Wang Y."/>
            <person name="Li Y."/>
            <person name="Lin Y.F."/>
            <person name="Zhou X."/>
            <person name="Ongaro L."/>
            <person name="Alonso C.A.I."/>
            <person name="Buddle E.R.S."/>
            <person name="Schneyer A.L."/>
            <person name="Byeon C.H."/>
            <person name="Hinck C.S."/>
            <person name="Mendelev N."/>
            <person name="Russell J.P."/>
            <person name="Cowan M."/>
            <person name="Boehm U."/>
            <person name="Ruf-Zamojski F."/>
            <person name="Zamojski M."/>
            <person name="Andoniadou C.L."/>
            <person name="Sealfon S.C."/>
            <person name="Harrison C.A."/>
            <person name="Walton K.L."/>
            <person name="Hinck A.P."/>
            <person name="Bernard D.J."/>
        </authorList>
    </citation>
    <scope>FUNCTION</scope>
</reference>
<reference evidence="23" key="17">
    <citation type="journal article" date="2021" name="Cell">
        <title>Structures of HCMV Trimer reveal the basis for receptor recognition and cell entry.</title>
        <authorList>
            <person name="Kschonsak M."/>
            <person name="Rouge L."/>
            <person name="Arthur C.P."/>
            <person name="Hoangdung H."/>
            <person name="Patel N."/>
            <person name="Kim I."/>
            <person name="Johnson M.C."/>
            <person name="Kraft E."/>
            <person name="Rohou A.L."/>
            <person name="Gill A."/>
            <person name="Martinez-Martin N."/>
            <person name="Payandeh J."/>
            <person name="Ciferri C."/>
        </authorList>
    </citation>
    <scope>STRUCTURE BY ELECTRON MICROSCOPY (2.60 ANGSTROMS) OF 1-781</scope>
    <scope>DISULFIDE BONDS</scope>
    <scope>INTERACTION WITH HCMV GH-GL-GO TRIMER (MICROBIAL INFECTION)</scope>
    <scope>FUNCTION (MICROBIAL INFECTION)</scope>
</reference>
<comment type="function">
    <text evidence="3 12 13 14 15 16 18">Cell surface receptor that regulates diverse cellular processes including cell proliferation, differentiation, migration, and apoptosis (PubMed:12958365, PubMed:19416857). Initiates BMP, inhibin, and TGF-beta signaling pathways by interacting with different ligands including TGFB1, BMP2, BMP5, BMP7 or GDF5 (PubMed:18184661). Alternatively, acts as a cell surface coreceptor for BMP ligands, serving to enhance ligand binding by differentially regulating BMPR1A/ALK3 and BMPR1B/ALK6 receptor trafficking (PubMed:19726563). Promotes epithelial cell adhesion, focal adhesion formation and integrin signaling during epithelial cell spreading on fibronectin (PubMed:22562249). By interacting with the scaffolding protein beta-arrestin2/ARRB2, regulates migration or actin cytoskeleton and promotes the activation of CDC42 as well as the inhibition of NF-kappa-B (PubMed:19416857, PubMed:19325136). In gonadotrope cells, acts as an inhibin A coreceptor and regulates follicle-stimulating hormone (FSH) levels and female fertility (By similarity). Plays a role in the inhibition of directed and random cell migration in epithelial cells by altering the actin cytoskeletal organization (PubMed:19416857). Participates in epithelial-mesenchymal transformation (EMT) upon binding to BMP2 or TGFB2, by activating the PAR6/SMURF1/RHOA pathway (By similarity).</text>
</comment>
<comment type="function">
    <text evidence="17">(Microbial infection) May act as a receptor for human cytomegalovirus in different cell types by interacting with HCMV trimer composed of GO, GH and GL.</text>
</comment>
<comment type="subunit">
    <text evidence="8 9 11 12 13 14 15 16">Forms homodimers and homooligomers (PubMed:11323414). Interacts with DYNLT4 (PubMed:16982625). Interacts with integrin ITGA5:ITGB1; this interaction promotes the internalization and trafficking of ITGA5:ITGB1 into endocytic vesicles (PubMed:22562249). Interacts with TGFB1, BMP2, BMP5, BMP7 or GDF5 and inhibin A via the ligand binding domains (PubMed:18184661). Interacts with ALK3/BMPR1A; this interaction results in the cell surface retention of BMPR1A (PubMed:19726563). Interacts with ALK6/BMPR1B; this interaction enhances BMPR1B-mediated stimulation of the BMP signaling pathway (PubMed:19726563). Interacts with the scaffolding protein beta-arrestin2/ARRB2; this interaction mediates internalization of TGFBR3 and thus regulates migration, actin cytoskeleton and activation of CDC42 (PubMed:12958365, PubMed:18184661, PubMed:19416857, PubMed:19325136).</text>
</comment>
<comment type="subunit">
    <text evidence="17">(Microbial infection) Interacts with human cytomegalovirus trimer complex composed of gH, gL, and gO; these interactions may promote HCMV cell entry in specific cell types.</text>
</comment>
<comment type="interaction">
    <interactant intactId="EBI-2852679">
        <id>Q03167</id>
    </interactant>
    <interactant intactId="EBI-373132">
        <id>O14908</id>
        <label>GIPC1</label>
    </interactant>
    <organismsDiffer>false</organismsDiffer>
    <experiments>3</experiments>
</comment>
<comment type="interaction">
    <interactant intactId="EBI-2852679">
        <id>Q03167</id>
    </interactant>
    <interactant intactId="EBI-779636">
        <id>P01137</id>
        <label>TGFB1</label>
    </interactant>
    <organismsDiffer>false</organismsDiffer>
    <experiments>2</experiments>
</comment>
<comment type="subcellular location">
    <subcellularLocation>
        <location evidence="14 15 16">Cell membrane</location>
        <topology evidence="4">Single-pass type I membrane protein</topology>
    </subcellularLocation>
    <subcellularLocation>
        <location evidence="3">Secreted</location>
    </subcellularLocation>
    <subcellularLocation>
        <location evidence="3">Secreted</location>
        <location evidence="3">Extracellular space</location>
        <location evidence="3">Extracellular matrix</location>
    </subcellularLocation>
    <text evidence="3">Exists both as a membrane-bound form and as soluble form in serum and in the extracellular matrix.</text>
</comment>
<comment type="alternative products">
    <event type="alternative splicing"/>
    <isoform>
        <id>Q03167-1</id>
        <name>1</name>
        <sequence type="displayed"/>
    </isoform>
    <isoform>
        <id>Q03167-2</id>
        <name>2</name>
        <sequence type="described" ref="VSP_040018"/>
    </isoform>
</comment>
<comment type="PTM">
    <text>Extensively modified by glycosaminoglycan groups (GAG).</text>
</comment>
<comment type="PTM">
    <text evidence="8 9">Phosphorylated in the cytoplasmic domain by the type II receptor TGFBR2 at THR-840 to mediate recruitment of ARRB2 and subsequent internalization of TGFBR2 and TGFBR3.</text>
</comment>
<comment type="sequence caution" evidence="21">
    <conflict type="frameshift">
        <sequence resource="EMBL-CDS" id="AAA67061"/>
    </conflict>
</comment>
<comment type="online information" name="Atlas of Genetics and Cytogenetics in Oncology and Haematology">
    <link uri="https://atlasgeneticsoncology.org/gene/42541/TGFBR3"/>
</comment>
<dbReference type="EMBL" id="L07594">
    <property type="protein sequence ID" value="AAA67061.1"/>
    <property type="status" value="ALT_FRAME"/>
    <property type="molecule type" value="mRNA"/>
</dbReference>
<dbReference type="EMBL" id="AJ251961">
    <property type="protein sequence ID" value="CAB64374.1"/>
    <property type="molecule type" value="mRNA"/>
</dbReference>
<dbReference type="EMBL" id="AY796304">
    <property type="protein sequence ID" value="AAV50003.1"/>
    <property type="molecule type" value="Genomic_DNA"/>
</dbReference>
<dbReference type="EMBL" id="AK291345">
    <property type="protein sequence ID" value="BAF84034.1"/>
    <property type="molecule type" value="mRNA"/>
</dbReference>
<dbReference type="EMBL" id="AC099334">
    <property type="status" value="NOT_ANNOTATED_CDS"/>
    <property type="molecule type" value="Genomic_DNA"/>
</dbReference>
<dbReference type="EMBL" id="AL162263">
    <property type="status" value="NOT_ANNOTATED_CDS"/>
    <property type="molecule type" value="Genomic_DNA"/>
</dbReference>
<dbReference type="EMBL" id="AL390780">
    <property type="status" value="NOT_ANNOTATED_CDS"/>
    <property type="molecule type" value="Genomic_DNA"/>
</dbReference>
<dbReference type="EMBL" id="AL445992">
    <property type="status" value="NOT_ANNOTATED_CDS"/>
    <property type="molecule type" value="Genomic_DNA"/>
</dbReference>
<dbReference type="EMBL" id="BC126116">
    <property type="protein sequence ID" value="AAI26117.1"/>
    <property type="molecule type" value="mRNA"/>
</dbReference>
<dbReference type="EMBL" id="BC136295">
    <property type="protein sequence ID" value="AAI36296.1"/>
    <property type="molecule type" value="mRNA"/>
</dbReference>
<dbReference type="CCDS" id="CCDS30770.1">
    <molecule id="Q03167-1"/>
</dbReference>
<dbReference type="CCDS" id="CCDS55614.1">
    <molecule id="Q03167-2"/>
</dbReference>
<dbReference type="PIR" id="JC1350">
    <property type="entry name" value="JC1350"/>
</dbReference>
<dbReference type="RefSeq" id="NP_001182612.1">
    <molecule id="Q03167-2"/>
    <property type="nucleotide sequence ID" value="NM_001195683.2"/>
</dbReference>
<dbReference type="RefSeq" id="NP_001182613.1">
    <molecule id="Q03167-2"/>
    <property type="nucleotide sequence ID" value="NM_001195684.1"/>
</dbReference>
<dbReference type="RefSeq" id="NP_003234.2">
    <molecule id="Q03167-1"/>
    <property type="nucleotide sequence ID" value="NM_003243.5"/>
</dbReference>
<dbReference type="RefSeq" id="XP_006710930.1">
    <molecule id="Q03167-1"/>
    <property type="nucleotide sequence ID" value="XM_006710867.3"/>
</dbReference>
<dbReference type="RefSeq" id="XP_006710931.1">
    <property type="nucleotide sequence ID" value="XM_006710868.2"/>
</dbReference>
<dbReference type="RefSeq" id="XP_047285203.1">
    <molecule id="Q03167-1"/>
    <property type="nucleotide sequence ID" value="XM_047429247.1"/>
</dbReference>
<dbReference type="RefSeq" id="XP_047285210.1">
    <molecule id="Q03167-1"/>
    <property type="nucleotide sequence ID" value="XM_047429254.1"/>
</dbReference>
<dbReference type="RefSeq" id="XP_047285211.1">
    <molecule id="Q03167-1"/>
    <property type="nucleotide sequence ID" value="XM_047429255.1"/>
</dbReference>
<dbReference type="RefSeq" id="XP_047285212.1">
    <molecule id="Q03167-2"/>
    <property type="nucleotide sequence ID" value="XM_047429256.1"/>
</dbReference>
<dbReference type="RefSeq" id="XP_047285217.1">
    <molecule id="Q03167-2"/>
    <property type="nucleotide sequence ID" value="XM_047429261.1"/>
</dbReference>
<dbReference type="RefSeq" id="XP_047285227.1">
    <molecule id="Q03167-2"/>
    <property type="nucleotide sequence ID" value="XM_047429271.1"/>
</dbReference>
<dbReference type="PDB" id="7LBG">
    <property type="method" value="EM"/>
    <property type="resolution" value="2.60 A"/>
    <property type="chains" value="D=1-781"/>
</dbReference>
<dbReference type="PDBsum" id="7LBG"/>
<dbReference type="EMDB" id="EMD-23254"/>
<dbReference type="SMR" id="Q03167"/>
<dbReference type="BioGRID" id="112907">
    <property type="interactions" value="42"/>
</dbReference>
<dbReference type="DIP" id="DIP-5940N"/>
<dbReference type="FunCoup" id="Q03167">
    <property type="interactions" value="331"/>
</dbReference>
<dbReference type="IntAct" id="Q03167">
    <property type="interactions" value="36"/>
</dbReference>
<dbReference type="MINT" id="Q03167"/>
<dbReference type="STRING" id="9606.ENSP00000212355"/>
<dbReference type="GlyCosmos" id="Q03167">
    <property type="glycosylation" value="8 sites, 1 glycan"/>
</dbReference>
<dbReference type="GlyGen" id="Q03167">
    <property type="glycosylation" value="10 sites, 4 N-linked glycans (2 sites), 2 O-linked glycans (2 sites)"/>
</dbReference>
<dbReference type="iPTMnet" id="Q03167"/>
<dbReference type="PhosphoSitePlus" id="Q03167"/>
<dbReference type="BioMuta" id="TGFBR3"/>
<dbReference type="DMDM" id="311033535"/>
<dbReference type="jPOST" id="Q03167"/>
<dbReference type="MassIVE" id="Q03167"/>
<dbReference type="PaxDb" id="9606-ENSP00000212355"/>
<dbReference type="PeptideAtlas" id="Q03167"/>
<dbReference type="ProteomicsDB" id="58197">
    <molecule id="Q03167-1"/>
</dbReference>
<dbReference type="ProteomicsDB" id="58198">
    <molecule id="Q03167-2"/>
</dbReference>
<dbReference type="Pumba" id="Q03167"/>
<dbReference type="Antibodypedia" id="1634">
    <property type="antibodies" value="502 antibodies from 43 providers"/>
</dbReference>
<dbReference type="DNASU" id="7049"/>
<dbReference type="Ensembl" id="ENST00000212355.9">
    <molecule id="Q03167-1"/>
    <property type="protein sequence ID" value="ENSP00000212355.4"/>
    <property type="gene ID" value="ENSG00000069702.11"/>
</dbReference>
<dbReference type="Ensembl" id="ENST00000370399.6">
    <molecule id="Q03167-2"/>
    <property type="protein sequence ID" value="ENSP00000359426.2"/>
    <property type="gene ID" value="ENSG00000069702.11"/>
</dbReference>
<dbReference type="Ensembl" id="ENST00000465892.6">
    <molecule id="Q03167-2"/>
    <property type="protein sequence ID" value="ENSP00000432638.1"/>
    <property type="gene ID" value="ENSG00000069702.11"/>
</dbReference>
<dbReference type="Ensembl" id="ENST00000525962.5">
    <molecule id="Q03167-1"/>
    <property type="protein sequence ID" value="ENSP00000436127.1"/>
    <property type="gene ID" value="ENSG00000069702.11"/>
</dbReference>
<dbReference type="GeneID" id="7049"/>
<dbReference type="KEGG" id="hsa:7049"/>
<dbReference type="MANE-Select" id="ENST00000212355.9">
    <property type="protein sequence ID" value="ENSP00000212355.4"/>
    <property type="RefSeq nucleotide sequence ID" value="NM_003243.5"/>
    <property type="RefSeq protein sequence ID" value="NP_003234.2"/>
</dbReference>
<dbReference type="UCSC" id="uc001doh.4">
    <molecule id="Q03167-1"/>
    <property type="organism name" value="human"/>
</dbReference>
<dbReference type="AGR" id="HGNC:11774"/>
<dbReference type="CTD" id="7049"/>
<dbReference type="DisGeNET" id="7049"/>
<dbReference type="GeneCards" id="TGFBR3"/>
<dbReference type="HGNC" id="HGNC:11774">
    <property type="gene designation" value="TGFBR3"/>
</dbReference>
<dbReference type="HPA" id="ENSG00000069702">
    <property type="expression patterns" value="Low tissue specificity"/>
</dbReference>
<dbReference type="MalaCards" id="TGFBR3"/>
<dbReference type="MIM" id="600742">
    <property type="type" value="gene"/>
</dbReference>
<dbReference type="neXtProt" id="NX_Q03167"/>
<dbReference type="OpenTargets" id="ENSG00000069702"/>
<dbReference type="Orphanet" id="231160">
    <property type="disease" value="Familial cerebral saccular aneurysm"/>
</dbReference>
<dbReference type="PharmGKB" id="PA36487"/>
<dbReference type="VEuPathDB" id="HostDB:ENSG00000069702"/>
<dbReference type="eggNOG" id="ENOG502QWNZ">
    <property type="taxonomic scope" value="Eukaryota"/>
</dbReference>
<dbReference type="GeneTree" id="ENSGT00530000063861"/>
<dbReference type="HOGENOM" id="CLU_018613_0_0_1"/>
<dbReference type="InParanoid" id="Q03167"/>
<dbReference type="OMA" id="VPQRECV"/>
<dbReference type="OrthoDB" id="6420824at2759"/>
<dbReference type="PAN-GO" id="Q03167">
    <property type="GO annotations" value="10 GO annotations based on evolutionary models"/>
</dbReference>
<dbReference type="PhylomeDB" id="Q03167"/>
<dbReference type="TreeFam" id="TF337375"/>
<dbReference type="PathwayCommons" id="Q03167"/>
<dbReference type="Reactome" id="R-HSA-1502540">
    <property type="pathway name" value="Signaling by Activin"/>
</dbReference>
<dbReference type="Reactome" id="R-HSA-190370">
    <property type="pathway name" value="FGFR1b ligand binding and activation"/>
</dbReference>
<dbReference type="Reactome" id="R-HSA-190373">
    <property type="pathway name" value="FGFR1c ligand binding and activation"/>
</dbReference>
<dbReference type="Reactome" id="R-HSA-201451">
    <property type="pathway name" value="Signaling by BMP"/>
</dbReference>
<dbReference type="Reactome" id="R-HSA-2173789">
    <property type="pathway name" value="TGF-beta receptor signaling activates SMADs"/>
</dbReference>
<dbReference type="Reactome" id="R-HSA-9839383">
    <property type="pathway name" value="TGFBR3 PTM regulation"/>
</dbReference>
<dbReference type="Reactome" id="R-HSA-9839389">
    <property type="pathway name" value="TGFBR3 regulates TGF-beta signaling"/>
</dbReference>
<dbReference type="Reactome" id="R-HSA-9839394">
    <property type="pathway name" value="TGFBR3 expression"/>
</dbReference>
<dbReference type="Reactome" id="R-HSA-9839397">
    <property type="pathway name" value="TGFBR3 regulates FGF2 signaling"/>
</dbReference>
<dbReference type="Reactome" id="R-HSA-9839406">
    <property type="pathway name" value="TGFBR3 regulates activin signaling"/>
</dbReference>
<dbReference type="SignaLink" id="Q03167"/>
<dbReference type="SIGNOR" id="Q03167"/>
<dbReference type="BioGRID-ORCS" id="7049">
    <property type="hits" value="12 hits in 1156 CRISPR screens"/>
</dbReference>
<dbReference type="ChiTaRS" id="TGFBR3">
    <property type="organism name" value="human"/>
</dbReference>
<dbReference type="GeneWiki" id="TGFBR3"/>
<dbReference type="GenomeRNAi" id="7049"/>
<dbReference type="Pharos" id="Q03167">
    <property type="development level" value="Tbio"/>
</dbReference>
<dbReference type="PRO" id="PR:Q03167"/>
<dbReference type="Proteomes" id="UP000005640">
    <property type="component" value="Chromosome 1"/>
</dbReference>
<dbReference type="RNAct" id="Q03167">
    <property type="molecule type" value="protein"/>
</dbReference>
<dbReference type="Bgee" id="ENSG00000069702">
    <property type="expression patterns" value="Expressed in renal glomerulus and 205 other cell types or tissues"/>
</dbReference>
<dbReference type="ExpressionAtlas" id="Q03167">
    <property type="expression patterns" value="baseline and differential"/>
</dbReference>
<dbReference type="GO" id="GO:0016323">
    <property type="term" value="C:basolateral plasma membrane"/>
    <property type="evidence" value="ECO:0000304"/>
    <property type="project" value="Reactome"/>
</dbReference>
<dbReference type="GO" id="GO:0009986">
    <property type="term" value="C:cell surface"/>
    <property type="evidence" value="ECO:0000250"/>
    <property type="project" value="BHF-UCL"/>
</dbReference>
<dbReference type="GO" id="GO:0005829">
    <property type="term" value="C:cytosol"/>
    <property type="evidence" value="ECO:0000304"/>
    <property type="project" value="Reactome"/>
</dbReference>
<dbReference type="GO" id="GO:0009897">
    <property type="term" value="C:external side of plasma membrane"/>
    <property type="evidence" value="ECO:0000314"/>
    <property type="project" value="BHF-UCL"/>
</dbReference>
<dbReference type="GO" id="GO:0070062">
    <property type="term" value="C:extracellular exosome"/>
    <property type="evidence" value="ECO:0007005"/>
    <property type="project" value="UniProtKB"/>
</dbReference>
<dbReference type="GO" id="GO:0005576">
    <property type="term" value="C:extracellular region"/>
    <property type="evidence" value="ECO:0000304"/>
    <property type="project" value="Reactome"/>
</dbReference>
<dbReference type="GO" id="GO:0005615">
    <property type="term" value="C:extracellular space"/>
    <property type="evidence" value="ECO:0007005"/>
    <property type="project" value="UniProtKB"/>
</dbReference>
<dbReference type="GO" id="GO:0034673">
    <property type="term" value="C:inhibin-betaglycan-ActRII complex"/>
    <property type="evidence" value="ECO:0000314"/>
    <property type="project" value="BHF-UCL"/>
</dbReference>
<dbReference type="GO" id="GO:0005886">
    <property type="term" value="C:plasma membrane"/>
    <property type="evidence" value="ECO:0000250"/>
    <property type="project" value="BHF-UCL"/>
</dbReference>
<dbReference type="GO" id="GO:0043235">
    <property type="term" value="C:receptor complex"/>
    <property type="evidence" value="ECO:0000314"/>
    <property type="project" value="BHF-UCL"/>
</dbReference>
<dbReference type="GO" id="GO:0048185">
    <property type="term" value="F:activin binding"/>
    <property type="evidence" value="ECO:0007669"/>
    <property type="project" value="Ensembl"/>
</dbReference>
<dbReference type="GO" id="GO:0036122">
    <property type="term" value="F:BMP binding"/>
    <property type="evidence" value="ECO:0000353"/>
    <property type="project" value="BHF-UCL"/>
</dbReference>
<dbReference type="GO" id="GO:0015026">
    <property type="term" value="F:coreceptor activity"/>
    <property type="evidence" value="ECO:0000314"/>
    <property type="project" value="BHF-UCL"/>
</dbReference>
<dbReference type="GO" id="GO:0017134">
    <property type="term" value="F:fibroblast growth factor binding"/>
    <property type="evidence" value="ECO:0007669"/>
    <property type="project" value="Ensembl"/>
</dbReference>
<dbReference type="GO" id="GO:0005539">
    <property type="term" value="F:glycosaminoglycan binding"/>
    <property type="evidence" value="ECO:0000250"/>
    <property type="project" value="BHF-UCL"/>
</dbReference>
<dbReference type="GO" id="GO:0008201">
    <property type="term" value="F:heparin binding"/>
    <property type="evidence" value="ECO:0000250"/>
    <property type="project" value="BHF-UCL"/>
</dbReference>
<dbReference type="GO" id="GO:0030165">
    <property type="term" value="F:PDZ domain binding"/>
    <property type="evidence" value="ECO:0000250"/>
    <property type="project" value="BHF-UCL"/>
</dbReference>
<dbReference type="GO" id="GO:0046332">
    <property type="term" value="F:SMAD binding"/>
    <property type="evidence" value="ECO:0000315"/>
    <property type="project" value="BHF-UCL"/>
</dbReference>
<dbReference type="GO" id="GO:0050431">
    <property type="term" value="F:transforming growth factor beta binding"/>
    <property type="evidence" value="ECO:0000314"/>
    <property type="project" value="BHF-UCL"/>
</dbReference>
<dbReference type="GO" id="GO:0005024">
    <property type="term" value="F:transforming growth factor beta receptor activity"/>
    <property type="evidence" value="ECO:0000314"/>
    <property type="project" value="BHF-UCL"/>
</dbReference>
<dbReference type="GO" id="GO:0070123">
    <property type="term" value="F:transforming growth factor beta receptor activity, type III"/>
    <property type="evidence" value="ECO:0000314"/>
    <property type="project" value="BHF-UCL"/>
</dbReference>
<dbReference type="GO" id="GO:0005160">
    <property type="term" value="F:transforming growth factor beta receptor binding"/>
    <property type="evidence" value="ECO:0000250"/>
    <property type="project" value="BHF-UCL"/>
</dbReference>
<dbReference type="GO" id="GO:0004888">
    <property type="term" value="F:transmembrane signaling receptor activity"/>
    <property type="evidence" value="ECO:0000314"/>
    <property type="project" value="BHF-UCL"/>
</dbReference>
<dbReference type="GO" id="GO:0005114">
    <property type="term" value="F:type II transforming growth factor beta receptor binding"/>
    <property type="evidence" value="ECO:0000314"/>
    <property type="project" value="BHF-UCL"/>
</dbReference>
<dbReference type="GO" id="GO:0031100">
    <property type="term" value="P:animal organ regeneration"/>
    <property type="evidence" value="ECO:0007669"/>
    <property type="project" value="Ensembl"/>
</dbReference>
<dbReference type="GO" id="GO:0030509">
    <property type="term" value="P:BMP signaling pathway"/>
    <property type="evidence" value="ECO:0000314"/>
    <property type="project" value="BHF-UCL"/>
</dbReference>
<dbReference type="GO" id="GO:0060317">
    <property type="term" value="P:cardiac epithelial to mesenchymal transition"/>
    <property type="evidence" value="ECO:0000314"/>
    <property type="project" value="BHF-UCL"/>
</dbReference>
<dbReference type="GO" id="GO:0060038">
    <property type="term" value="P:cardiac muscle cell proliferation"/>
    <property type="evidence" value="ECO:0000250"/>
    <property type="project" value="BHF-UCL"/>
</dbReference>
<dbReference type="GO" id="GO:0016477">
    <property type="term" value="P:cell migration"/>
    <property type="evidence" value="ECO:0000250"/>
    <property type="project" value="BHF-UCL"/>
</dbReference>
<dbReference type="GO" id="GO:0060318">
    <property type="term" value="P:definitive erythrocyte differentiation"/>
    <property type="evidence" value="ECO:0000250"/>
    <property type="project" value="BHF-UCL"/>
</dbReference>
<dbReference type="GO" id="GO:0060216">
    <property type="term" value="P:definitive hemopoiesis"/>
    <property type="evidence" value="ECO:0000250"/>
    <property type="project" value="BHF-UCL"/>
</dbReference>
<dbReference type="GO" id="GO:0060939">
    <property type="term" value="P:epicardium-derived cardiac fibroblast cell development"/>
    <property type="evidence" value="ECO:0000250"/>
    <property type="project" value="BHF-UCL"/>
</dbReference>
<dbReference type="GO" id="GO:0001837">
    <property type="term" value="P:epithelial to mesenchymal transition"/>
    <property type="evidence" value="ECO:0000314"/>
    <property type="project" value="BHF-UCL"/>
</dbReference>
<dbReference type="GO" id="GO:0003007">
    <property type="term" value="P:heart morphogenesis"/>
    <property type="evidence" value="ECO:0000250"/>
    <property type="project" value="BHF-UCL"/>
</dbReference>
<dbReference type="GO" id="GO:0060347">
    <property type="term" value="P:heart trabecula formation"/>
    <property type="evidence" value="ECO:0000250"/>
    <property type="project" value="BHF-UCL"/>
</dbReference>
<dbReference type="GO" id="GO:0061384">
    <property type="term" value="P:heart trabecula morphogenesis"/>
    <property type="evidence" value="ECO:0000250"/>
    <property type="project" value="BHF-UCL"/>
</dbReference>
<dbReference type="GO" id="GO:0006955">
    <property type="term" value="P:immune response"/>
    <property type="evidence" value="ECO:0000315"/>
    <property type="project" value="BHF-UCL"/>
</dbReference>
<dbReference type="GO" id="GO:0035556">
    <property type="term" value="P:intracellular signal transduction"/>
    <property type="evidence" value="ECO:0000315"/>
    <property type="project" value="BHF-UCL"/>
</dbReference>
<dbReference type="GO" id="GO:0001889">
    <property type="term" value="P:liver development"/>
    <property type="evidence" value="ECO:0000250"/>
    <property type="project" value="BHF-UCL"/>
</dbReference>
<dbReference type="GO" id="GO:0003150">
    <property type="term" value="P:muscular septum morphogenesis"/>
    <property type="evidence" value="ECO:0000250"/>
    <property type="project" value="BHF-UCL"/>
</dbReference>
<dbReference type="GO" id="GO:0043124">
    <property type="term" value="P:negative regulation of canonical NF-kappaB signal transduction"/>
    <property type="evidence" value="ECO:0000314"/>
    <property type="project" value="BHF-UCL"/>
</dbReference>
<dbReference type="GO" id="GO:0030336">
    <property type="term" value="P:negative regulation of cell migration"/>
    <property type="evidence" value="ECO:0000314"/>
    <property type="project" value="BHF-UCL"/>
</dbReference>
<dbReference type="GO" id="GO:0050680">
    <property type="term" value="P:negative regulation of epithelial cell proliferation"/>
    <property type="evidence" value="ECO:0000250"/>
    <property type="project" value="BHF-UCL"/>
</dbReference>
<dbReference type="GO" id="GO:1901202">
    <property type="term" value="P:negative regulation of extracellular matrix assembly"/>
    <property type="evidence" value="ECO:0000315"/>
    <property type="project" value="BHF-UCL"/>
</dbReference>
<dbReference type="GO" id="GO:0060392">
    <property type="term" value="P:negative regulation of SMAD protein signal transduction"/>
    <property type="evidence" value="ECO:0000315"/>
    <property type="project" value="BHF-UCL"/>
</dbReference>
<dbReference type="GO" id="GO:0030512">
    <property type="term" value="P:negative regulation of transforming growth factor beta receptor signaling pathway"/>
    <property type="evidence" value="ECO:0007669"/>
    <property type="project" value="Ensembl"/>
</dbReference>
<dbReference type="GO" id="GO:0003151">
    <property type="term" value="P:outflow tract morphogenesis"/>
    <property type="evidence" value="ECO:0000250"/>
    <property type="project" value="BHF-UCL"/>
</dbReference>
<dbReference type="GO" id="GO:0060045">
    <property type="term" value="P:positive regulation of cardiac muscle cell proliferation"/>
    <property type="evidence" value="ECO:0000250"/>
    <property type="project" value="BHF-UCL"/>
</dbReference>
<dbReference type="GO" id="GO:0090050">
    <property type="term" value="P:positive regulation of cell migration involved in sprouting angiogenesis"/>
    <property type="evidence" value="ECO:0000315"/>
    <property type="project" value="BHF-UCL"/>
</dbReference>
<dbReference type="GO" id="GO:0010628">
    <property type="term" value="P:positive regulation of gene expression"/>
    <property type="evidence" value="ECO:0000315"/>
    <property type="project" value="BHF-UCL"/>
</dbReference>
<dbReference type="GO" id="GO:0060391">
    <property type="term" value="P:positive regulation of SMAD protein signal transduction"/>
    <property type="evidence" value="ECO:0000314"/>
    <property type="project" value="BHF-UCL"/>
</dbReference>
<dbReference type="GO" id="GO:0030511">
    <property type="term" value="P:positive regulation of transforming growth factor beta receptor signaling pathway"/>
    <property type="evidence" value="ECO:0007669"/>
    <property type="project" value="Ensembl"/>
</dbReference>
<dbReference type="GO" id="GO:0017015">
    <property type="term" value="P:regulation of transforming growth factor beta receptor signaling pathway"/>
    <property type="evidence" value="ECO:0000318"/>
    <property type="project" value="GO_Central"/>
</dbReference>
<dbReference type="GO" id="GO:0032354">
    <property type="term" value="P:response to follicle-stimulating hormone"/>
    <property type="evidence" value="ECO:0000314"/>
    <property type="project" value="BHF-UCL"/>
</dbReference>
<dbReference type="GO" id="GO:0001666">
    <property type="term" value="P:response to hypoxia"/>
    <property type="evidence" value="ECO:0007669"/>
    <property type="project" value="Ensembl"/>
</dbReference>
<dbReference type="GO" id="GO:0034699">
    <property type="term" value="P:response to luteinizing hormone"/>
    <property type="evidence" value="ECO:0000314"/>
    <property type="project" value="BHF-UCL"/>
</dbReference>
<dbReference type="GO" id="GO:0034695">
    <property type="term" value="P:response to prostaglandin E"/>
    <property type="evidence" value="ECO:0000314"/>
    <property type="project" value="BHF-UCL"/>
</dbReference>
<dbReference type="GO" id="GO:0062009">
    <property type="term" value="P:secondary palate development"/>
    <property type="evidence" value="ECO:0000250"/>
    <property type="project" value="BHF-UCL"/>
</dbReference>
<dbReference type="GO" id="GO:0007181">
    <property type="term" value="P:transforming growth factor beta receptor complex assembly"/>
    <property type="evidence" value="ECO:0007669"/>
    <property type="project" value="Ensembl"/>
</dbReference>
<dbReference type="GO" id="GO:0007179">
    <property type="term" value="P:transforming growth factor beta receptor signaling pathway"/>
    <property type="evidence" value="ECO:0000314"/>
    <property type="project" value="BHF-UCL"/>
</dbReference>
<dbReference type="GO" id="GO:0060979">
    <property type="term" value="P:vasculogenesis involved in coronary vascular morphogenesis"/>
    <property type="evidence" value="ECO:0000250"/>
    <property type="project" value="BHF-UCL"/>
</dbReference>
<dbReference type="GO" id="GO:0055010">
    <property type="term" value="P:ventricular cardiac muscle tissue morphogenesis"/>
    <property type="evidence" value="ECO:0000250"/>
    <property type="project" value="BHF-UCL"/>
</dbReference>
<dbReference type="GO" id="GO:0003223">
    <property type="term" value="P:ventricular compact myocardium morphogenesis"/>
    <property type="evidence" value="ECO:0000250"/>
    <property type="project" value="BHF-UCL"/>
</dbReference>
<dbReference type="GO" id="GO:0060412">
    <property type="term" value="P:ventricular septum morphogenesis"/>
    <property type="evidence" value="ECO:0000250"/>
    <property type="project" value="BHF-UCL"/>
</dbReference>
<dbReference type="FunFam" id="2.60.40.3210:FF:000008">
    <property type="entry name" value="Transforming growth factor beta receptor 3"/>
    <property type="match status" value="1"/>
</dbReference>
<dbReference type="FunFam" id="2.60.40.4100:FF:000003">
    <property type="entry name" value="Transforming growth factor beta receptor type 3"/>
    <property type="match status" value="1"/>
</dbReference>
<dbReference type="Gene3D" id="2.60.40.4100">
    <property type="entry name" value="Zona pellucida, ZP-C domain"/>
    <property type="match status" value="1"/>
</dbReference>
<dbReference type="Gene3D" id="2.60.40.3210">
    <property type="entry name" value="Zona pellucida, ZP-N domain"/>
    <property type="match status" value="1"/>
</dbReference>
<dbReference type="InterPro" id="IPR055355">
    <property type="entry name" value="ZP-C"/>
</dbReference>
<dbReference type="InterPro" id="IPR042235">
    <property type="entry name" value="ZP-C_dom"/>
</dbReference>
<dbReference type="InterPro" id="IPR055356">
    <property type="entry name" value="ZP-N"/>
</dbReference>
<dbReference type="InterPro" id="IPR048290">
    <property type="entry name" value="ZP_chr"/>
</dbReference>
<dbReference type="InterPro" id="IPR001507">
    <property type="entry name" value="ZP_dom"/>
</dbReference>
<dbReference type="InterPro" id="IPR017977">
    <property type="entry name" value="ZP_dom_CS"/>
</dbReference>
<dbReference type="PANTHER" id="PTHR14002">
    <property type="entry name" value="ENDOGLIN/TGF-BETA RECEPTOR TYPE III"/>
    <property type="match status" value="1"/>
</dbReference>
<dbReference type="PANTHER" id="PTHR14002:SF7">
    <property type="entry name" value="TRANSFORMING GROWTH FACTOR BETA RECEPTOR TYPE 3"/>
    <property type="match status" value="1"/>
</dbReference>
<dbReference type="Pfam" id="PF00100">
    <property type="entry name" value="Zona_pellucida"/>
    <property type="match status" value="1"/>
</dbReference>
<dbReference type="Pfam" id="PF23344">
    <property type="entry name" value="ZP-N"/>
    <property type="match status" value="1"/>
</dbReference>
<dbReference type="PRINTS" id="PR00023">
    <property type="entry name" value="ZPELLUCIDA"/>
</dbReference>
<dbReference type="SMART" id="SM00241">
    <property type="entry name" value="ZP"/>
    <property type="match status" value="1"/>
</dbReference>
<dbReference type="PROSITE" id="PS00682">
    <property type="entry name" value="ZP_1"/>
    <property type="match status" value="1"/>
</dbReference>
<dbReference type="PROSITE" id="PS51034">
    <property type="entry name" value="ZP_2"/>
    <property type="match status" value="1"/>
</dbReference>
<proteinExistence type="evidence at protein level"/>
<evidence type="ECO:0000250" key="1"/>
<evidence type="ECO:0000250" key="2">
    <source>
        <dbReference type="UniProtKB" id="O88393"/>
    </source>
</evidence>
<evidence type="ECO:0000250" key="3">
    <source>
        <dbReference type="UniProtKB" id="P26342"/>
    </source>
</evidence>
<evidence type="ECO:0000255" key="4"/>
<evidence type="ECO:0000255" key="5">
    <source>
        <dbReference type="PROSITE-ProRule" id="PRU00375"/>
    </source>
</evidence>
<evidence type="ECO:0000256" key="6">
    <source>
        <dbReference type="SAM" id="MobiDB-lite"/>
    </source>
</evidence>
<evidence type="ECO:0000269" key="7">
    <source>
    </source>
</evidence>
<evidence type="ECO:0000269" key="8">
    <source>
    </source>
</evidence>
<evidence type="ECO:0000269" key="9">
    <source>
    </source>
</evidence>
<evidence type="ECO:0000269" key="10">
    <source>
    </source>
</evidence>
<evidence type="ECO:0000269" key="11">
    <source>
    </source>
</evidence>
<evidence type="ECO:0000269" key="12">
    <source>
    </source>
</evidence>
<evidence type="ECO:0000269" key="13">
    <source>
    </source>
</evidence>
<evidence type="ECO:0000269" key="14">
    <source>
    </source>
</evidence>
<evidence type="ECO:0000269" key="15">
    <source>
    </source>
</evidence>
<evidence type="ECO:0000269" key="16">
    <source>
    </source>
</evidence>
<evidence type="ECO:0000269" key="17">
    <source>
    </source>
</evidence>
<evidence type="ECO:0000269" key="18">
    <source>
    </source>
</evidence>
<evidence type="ECO:0000269" key="19">
    <source ref="3"/>
</evidence>
<evidence type="ECO:0000303" key="20">
    <source>
    </source>
</evidence>
<evidence type="ECO:0000305" key="21"/>
<evidence type="ECO:0000312" key="22">
    <source>
        <dbReference type="HGNC" id="HGNC:11774"/>
    </source>
</evidence>
<evidence type="ECO:0007744" key="23">
    <source>
        <dbReference type="PDB" id="7LBG"/>
    </source>
</evidence>
<evidence type="ECO:0007829" key="24">
    <source>
        <dbReference type="PDB" id="7LBG"/>
    </source>
</evidence>
<feature type="signal peptide" evidence="4">
    <location>
        <begin position="1"/>
        <end position="20"/>
    </location>
</feature>
<feature type="chain" id="PRO_0000041663" description="Transforming growth factor beta receptor type 3">
    <location>
        <begin position="21"/>
        <end position="851"/>
    </location>
</feature>
<feature type="topological domain" description="Extracellular" evidence="4">
    <location>
        <begin position="21"/>
        <end position="787"/>
    </location>
</feature>
<feature type="transmembrane region" description="Helical" evidence="4">
    <location>
        <begin position="788"/>
        <end position="809"/>
    </location>
</feature>
<feature type="topological domain" description="Cytoplasmic" evidence="4">
    <location>
        <begin position="810"/>
        <end position="851"/>
    </location>
</feature>
<feature type="domain" description="ZP" evidence="5">
    <location>
        <begin position="455"/>
        <end position="730"/>
    </location>
</feature>
<feature type="region of interest" description="Interaction with TGF-beta ligand" evidence="1">
    <location>
        <begin position="737"/>
        <end position="751"/>
    </location>
</feature>
<feature type="region of interest" description="Disordered" evidence="6">
    <location>
        <begin position="816"/>
        <end position="851"/>
    </location>
</feature>
<feature type="compositionally biased region" description="Polar residues" evidence="6">
    <location>
        <begin position="817"/>
        <end position="834"/>
    </location>
</feature>
<feature type="compositionally biased region" description="Low complexity" evidence="6">
    <location>
        <begin position="836"/>
        <end position="851"/>
    </location>
</feature>
<feature type="modified residue" description="Phosphothreonine" evidence="9">
    <location>
        <position position="840"/>
    </location>
</feature>
<feature type="glycosylation site" description="N-linked (GlcNAc...) asparagine" evidence="4">
    <location>
        <position position="141"/>
    </location>
</feature>
<feature type="glycosylation site" description="N-linked (GlcNAc...) asparagine" evidence="4">
    <location>
        <position position="492"/>
    </location>
</feature>
<feature type="glycosylation site" description="O-linked (Xyl...) (glycosaminoglycan) serine" evidence="1">
    <location>
        <position position="534"/>
    </location>
</feature>
<feature type="glycosylation site" description="O-linked (Xyl...) (glycosaminoglycan) serine" evidence="1">
    <location>
        <position position="545"/>
    </location>
</feature>
<feature type="glycosylation site" description="N-linked (GlcNAc...) asparagine" evidence="4">
    <location>
        <position position="571"/>
    </location>
</feature>
<feature type="glycosylation site" description="N-linked (GlcNAc...) asparagine" evidence="4">
    <location>
        <position position="590"/>
    </location>
</feature>
<feature type="glycosylation site" description="N-linked (GlcNAc...) asparagine" evidence="4">
    <location>
        <position position="697"/>
    </location>
</feature>
<feature type="disulfide bond" evidence="17 23">
    <location>
        <begin position="52"/>
        <end position="197"/>
    </location>
</feature>
<feature type="disulfide bond" evidence="3">
    <location>
        <begin position="639"/>
        <end position="705"/>
    </location>
</feature>
<feature type="disulfide bond" evidence="3">
    <location>
        <begin position="660"/>
        <end position="730"/>
    </location>
</feature>
<feature type="disulfide bond" evidence="2">
    <location>
        <begin position="710"/>
        <end position="723"/>
    </location>
</feature>
<feature type="splice variant" id="VSP_040018" description="In isoform 2." evidence="20">
    <location>
        <position position="359"/>
    </location>
</feature>
<feature type="sequence variant" id="VAR_020891" description="In dbSNP:rs17884205." evidence="19">
    <original>S</original>
    <variation>N</variation>
    <location>
        <position position="14"/>
    </location>
</feature>
<feature type="sequence variant" id="VAR_014920" description="In dbSNP:rs1805110." evidence="7 10 19">
    <original>S</original>
    <variation>F</variation>
    <location>
        <position position="15"/>
    </location>
</feature>
<feature type="sequence variant" id="VAR_020892" description="In dbSNP:rs17885124." evidence="19">
    <original>W</original>
    <variation>L</variation>
    <location>
        <position position="163"/>
    </location>
</feature>
<feature type="sequence variant" id="VAR_057499" description="In dbSNP:rs11466592.">
    <original>F</original>
    <variation>I</variation>
    <location>
        <position position="351"/>
    </location>
</feature>
<feature type="sequence variant" id="VAR_020893" description="In dbSNP:rs17882578." evidence="19">
    <original>A</original>
    <variation>T</variation>
    <location>
        <position position="635"/>
    </location>
</feature>
<feature type="sequence variant" id="VAR_020894" description="In dbSNP:rs17882828." evidence="19">
    <original>G</original>
    <variation>R</variation>
    <location>
        <position position="765"/>
    </location>
</feature>
<feature type="sequence variant" id="VAR_066625" description="In dbSNP:rs2228363.">
    <original>P</original>
    <variation>S</variation>
    <location>
        <position position="777"/>
    </location>
</feature>
<feature type="mutagenesis site" description="Partial loss of phosphorylation by TGFBR2." evidence="9 14">
    <original>T</original>
    <variation>A</variation>
    <location>
        <position position="840"/>
    </location>
</feature>
<feature type="sequence conflict" description="In Ref. 4; BAF84034." evidence="21" ref="4">
    <original>P</original>
    <variation>S</variation>
    <location>
        <position position="89"/>
    </location>
</feature>
<feature type="sequence conflict" description="In Ref. 4; BAF84034." evidence="21" ref="4">
    <original>I</original>
    <variation>V</variation>
    <location>
        <position position="238"/>
    </location>
</feature>
<feature type="strand" evidence="24">
    <location>
        <begin position="49"/>
        <end position="51"/>
    </location>
</feature>
<feature type="helix" evidence="24">
    <location>
        <begin position="56"/>
        <end position="59"/>
    </location>
</feature>
<feature type="strand" evidence="24">
    <location>
        <begin position="60"/>
        <end position="70"/>
    </location>
</feature>
<feature type="strand" evidence="24">
    <location>
        <begin position="82"/>
        <end position="89"/>
    </location>
</feature>
<feature type="strand" evidence="24">
    <location>
        <begin position="94"/>
        <end position="96"/>
    </location>
</feature>
<feature type="strand" evidence="24">
    <location>
        <begin position="100"/>
        <end position="105"/>
    </location>
</feature>
<feature type="strand" evidence="24">
    <location>
        <begin position="111"/>
        <end position="116"/>
    </location>
</feature>
<feature type="strand" evidence="24">
    <location>
        <begin position="125"/>
        <end position="129"/>
    </location>
</feature>
<feature type="strand" evidence="24">
    <location>
        <begin position="134"/>
        <end position="138"/>
    </location>
</feature>
<feature type="helix" evidence="24">
    <location>
        <begin position="140"/>
        <end position="143"/>
    </location>
</feature>
<feature type="strand" evidence="24">
    <location>
        <begin position="146"/>
        <end position="150"/>
    </location>
</feature>
<feature type="helix" evidence="24">
    <location>
        <begin position="157"/>
        <end position="168"/>
    </location>
</feature>
<feature type="strand" evidence="24">
    <location>
        <begin position="172"/>
        <end position="178"/>
    </location>
</feature>
<feature type="strand" evidence="24">
    <location>
        <begin position="181"/>
        <end position="187"/>
    </location>
</feature>
<protein>
    <recommendedName>
        <fullName>Transforming growth factor beta receptor type 3</fullName>
        <shortName>TGF-beta receptor type 3</shortName>
        <shortName>TGFR-3</shortName>
    </recommendedName>
    <alternativeName>
        <fullName>Betaglycan</fullName>
    </alternativeName>
    <alternativeName>
        <fullName>Transforming growth factor beta receptor III</fullName>
        <shortName>TGF-beta receptor type III</shortName>
    </alternativeName>
</protein>
<accession>Q03167</accession>
<accession>A0AUW8</accession>
<accession>A8K5N0</accession>
<accession>B9EG88</accession>
<accession>Q5T2T4</accession>
<accession>Q5U731</accession>
<accession>Q9UGI2</accession>
<organism>
    <name type="scientific">Homo sapiens</name>
    <name type="common">Human</name>
    <dbReference type="NCBI Taxonomy" id="9606"/>
    <lineage>
        <taxon>Eukaryota</taxon>
        <taxon>Metazoa</taxon>
        <taxon>Chordata</taxon>
        <taxon>Craniata</taxon>
        <taxon>Vertebrata</taxon>
        <taxon>Euteleostomi</taxon>
        <taxon>Mammalia</taxon>
        <taxon>Eutheria</taxon>
        <taxon>Euarchontoglires</taxon>
        <taxon>Primates</taxon>
        <taxon>Haplorrhini</taxon>
        <taxon>Catarrhini</taxon>
        <taxon>Hominidae</taxon>
        <taxon>Homo</taxon>
    </lineage>
</organism>
<keyword id="KW-0002">3D-structure</keyword>
<keyword id="KW-0025">Alternative splicing</keyword>
<keyword id="KW-1003">Cell membrane</keyword>
<keyword id="KW-1015">Disulfide bond</keyword>
<keyword id="KW-0272">Extracellular matrix</keyword>
<keyword id="KW-0325">Glycoprotein</keyword>
<keyword id="KW-0472">Membrane</keyword>
<keyword id="KW-0597">Phosphoprotein</keyword>
<keyword id="KW-0654">Proteoglycan</keyword>
<keyword id="KW-1267">Proteomics identification</keyword>
<keyword id="KW-0675">Receptor</keyword>
<keyword id="KW-1185">Reference proteome</keyword>
<keyword id="KW-0964">Secreted</keyword>
<keyword id="KW-0732">Signal</keyword>
<keyword id="KW-0812">Transmembrane</keyword>
<keyword id="KW-1133">Transmembrane helix</keyword>